<feature type="chain" id="PRO_1000096484" description="Triosephosphate isomerase">
    <location>
        <begin position="1"/>
        <end position="252"/>
    </location>
</feature>
<feature type="active site" description="Electrophile" evidence="1">
    <location>
        <position position="96"/>
    </location>
</feature>
<feature type="active site" description="Proton acceptor" evidence="1">
    <location>
        <position position="168"/>
    </location>
</feature>
<feature type="binding site" evidence="1">
    <location>
        <begin position="9"/>
        <end position="11"/>
    </location>
    <ligand>
        <name>substrate</name>
    </ligand>
</feature>
<feature type="binding site" evidence="1">
    <location>
        <position position="174"/>
    </location>
    <ligand>
        <name>substrate</name>
    </ligand>
</feature>
<feature type="binding site" evidence="1">
    <location>
        <position position="214"/>
    </location>
    <ligand>
        <name>substrate</name>
    </ligand>
</feature>
<feature type="binding site" evidence="1">
    <location>
        <begin position="235"/>
        <end position="236"/>
    </location>
    <ligand>
        <name>substrate</name>
    </ligand>
</feature>
<accession>B3QV54</accession>
<organism>
    <name type="scientific">Chloroherpeton thalassium (strain ATCC 35110 / GB-78)</name>
    <dbReference type="NCBI Taxonomy" id="517418"/>
    <lineage>
        <taxon>Bacteria</taxon>
        <taxon>Pseudomonadati</taxon>
        <taxon>Chlorobiota</taxon>
        <taxon>Chlorobiia</taxon>
        <taxon>Chlorobiales</taxon>
        <taxon>Chloroherpetonaceae</taxon>
        <taxon>Chloroherpeton</taxon>
    </lineage>
</organism>
<keyword id="KW-0963">Cytoplasm</keyword>
<keyword id="KW-0312">Gluconeogenesis</keyword>
<keyword id="KW-0324">Glycolysis</keyword>
<keyword id="KW-0413">Isomerase</keyword>
<keyword id="KW-1185">Reference proteome</keyword>
<name>TPIS_CHLT3</name>
<reference key="1">
    <citation type="submission" date="2008-06" db="EMBL/GenBank/DDBJ databases">
        <title>Complete sequence of Chloroherpeton thalassium ATCC 35110.</title>
        <authorList>
            <consortium name="US DOE Joint Genome Institute"/>
            <person name="Lucas S."/>
            <person name="Copeland A."/>
            <person name="Lapidus A."/>
            <person name="Glavina del Rio T."/>
            <person name="Dalin E."/>
            <person name="Tice H."/>
            <person name="Bruce D."/>
            <person name="Goodwin L."/>
            <person name="Pitluck S."/>
            <person name="Schmutz J."/>
            <person name="Larimer F."/>
            <person name="Land M."/>
            <person name="Hauser L."/>
            <person name="Kyrpides N."/>
            <person name="Mikhailova N."/>
            <person name="Liu Z."/>
            <person name="Li T."/>
            <person name="Zhao F."/>
            <person name="Overmann J."/>
            <person name="Bryant D.A."/>
            <person name="Richardson P."/>
        </authorList>
    </citation>
    <scope>NUCLEOTIDE SEQUENCE [LARGE SCALE GENOMIC DNA]</scope>
    <source>
        <strain>ATCC 35110 / GB-78</strain>
    </source>
</reference>
<evidence type="ECO:0000255" key="1">
    <source>
        <dbReference type="HAMAP-Rule" id="MF_00147"/>
    </source>
</evidence>
<protein>
    <recommendedName>
        <fullName evidence="1">Triosephosphate isomerase</fullName>
        <shortName evidence="1">TIM</shortName>
        <shortName evidence="1">TPI</shortName>
        <ecNumber evidence="1">5.3.1.1</ecNumber>
    </recommendedName>
    <alternativeName>
        <fullName evidence="1">Triose-phosphate isomerase</fullName>
    </alternativeName>
</protein>
<proteinExistence type="inferred from homology"/>
<comment type="function">
    <text evidence="1">Involved in the gluconeogenesis. Catalyzes stereospecifically the conversion of dihydroxyacetone phosphate (DHAP) to D-glyceraldehyde-3-phosphate (G3P).</text>
</comment>
<comment type="catalytic activity">
    <reaction evidence="1">
        <text>D-glyceraldehyde 3-phosphate = dihydroxyacetone phosphate</text>
        <dbReference type="Rhea" id="RHEA:18585"/>
        <dbReference type="ChEBI" id="CHEBI:57642"/>
        <dbReference type="ChEBI" id="CHEBI:59776"/>
        <dbReference type="EC" id="5.3.1.1"/>
    </reaction>
</comment>
<comment type="pathway">
    <text evidence="1">Carbohydrate biosynthesis; gluconeogenesis.</text>
</comment>
<comment type="pathway">
    <text evidence="1">Carbohydrate degradation; glycolysis; D-glyceraldehyde 3-phosphate from glycerone phosphate: step 1/1.</text>
</comment>
<comment type="subunit">
    <text evidence="1">Homodimer.</text>
</comment>
<comment type="subcellular location">
    <subcellularLocation>
        <location evidence="1">Cytoplasm</location>
    </subcellularLocation>
</comment>
<comment type="similarity">
    <text evidence="1">Belongs to the triosephosphate isomerase family.</text>
</comment>
<sequence>MRKKFVAGNWKMNKDLLGAVSLATEILQLLGDEAPTCEVAIAPTFLCQQAVFQVIDESAIKLAAQNCFYEDQGAYTGEISAAMLRNSGCEYVILGHSERRQYFNETDEIVNKKVKNALSVELDVIMCVGETLEQRESGVTKSVVETQVRGGLKDLTAEDMKSVVIAYEPVWAIGTGKTATPEQAQEVHAFIRGIVKDMFGEEVANELRIQYGGSVKTSNAKELFGMPDIDGGLIGGASLNAEDFVEIIKSAE</sequence>
<dbReference type="EC" id="5.3.1.1" evidence="1"/>
<dbReference type="EMBL" id="CP001100">
    <property type="protein sequence ID" value="ACF13008.1"/>
    <property type="molecule type" value="Genomic_DNA"/>
</dbReference>
<dbReference type="RefSeq" id="WP_012499092.1">
    <property type="nucleotide sequence ID" value="NC_011026.1"/>
</dbReference>
<dbReference type="SMR" id="B3QV54"/>
<dbReference type="STRING" id="517418.Ctha_0537"/>
<dbReference type="KEGG" id="cts:Ctha_0537"/>
<dbReference type="eggNOG" id="COG0149">
    <property type="taxonomic scope" value="Bacteria"/>
</dbReference>
<dbReference type="HOGENOM" id="CLU_024251_2_3_10"/>
<dbReference type="OrthoDB" id="9809429at2"/>
<dbReference type="UniPathway" id="UPA00109">
    <property type="reaction ID" value="UER00189"/>
</dbReference>
<dbReference type="UniPathway" id="UPA00138"/>
<dbReference type="Proteomes" id="UP000001208">
    <property type="component" value="Chromosome"/>
</dbReference>
<dbReference type="GO" id="GO:0005829">
    <property type="term" value="C:cytosol"/>
    <property type="evidence" value="ECO:0007669"/>
    <property type="project" value="TreeGrafter"/>
</dbReference>
<dbReference type="GO" id="GO:0004807">
    <property type="term" value="F:triose-phosphate isomerase activity"/>
    <property type="evidence" value="ECO:0007669"/>
    <property type="project" value="UniProtKB-UniRule"/>
</dbReference>
<dbReference type="GO" id="GO:0006094">
    <property type="term" value="P:gluconeogenesis"/>
    <property type="evidence" value="ECO:0007669"/>
    <property type="project" value="UniProtKB-UniRule"/>
</dbReference>
<dbReference type="GO" id="GO:0046166">
    <property type="term" value="P:glyceraldehyde-3-phosphate biosynthetic process"/>
    <property type="evidence" value="ECO:0007669"/>
    <property type="project" value="TreeGrafter"/>
</dbReference>
<dbReference type="GO" id="GO:0019563">
    <property type="term" value="P:glycerol catabolic process"/>
    <property type="evidence" value="ECO:0007669"/>
    <property type="project" value="TreeGrafter"/>
</dbReference>
<dbReference type="GO" id="GO:0006096">
    <property type="term" value="P:glycolytic process"/>
    <property type="evidence" value="ECO:0007669"/>
    <property type="project" value="UniProtKB-UniRule"/>
</dbReference>
<dbReference type="CDD" id="cd00311">
    <property type="entry name" value="TIM"/>
    <property type="match status" value="1"/>
</dbReference>
<dbReference type="FunFam" id="3.20.20.70:FF:000016">
    <property type="entry name" value="Triosephosphate isomerase"/>
    <property type="match status" value="1"/>
</dbReference>
<dbReference type="Gene3D" id="3.20.20.70">
    <property type="entry name" value="Aldolase class I"/>
    <property type="match status" value="1"/>
</dbReference>
<dbReference type="HAMAP" id="MF_00147_B">
    <property type="entry name" value="TIM_B"/>
    <property type="match status" value="1"/>
</dbReference>
<dbReference type="InterPro" id="IPR013785">
    <property type="entry name" value="Aldolase_TIM"/>
</dbReference>
<dbReference type="InterPro" id="IPR035990">
    <property type="entry name" value="TIM_sf"/>
</dbReference>
<dbReference type="InterPro" id="IPR022896">
    <property type="entry name" value="TrioseP_Isoase_bac/euk"/>
</dbReference>
<dbReference type="InterPro" id="IPR000652">
    <property type="entry name" value="Triosephosphate_isomerase"/>
</dbReference>
<dbReference type="InterPro" id="IPR020861">
    <property type="entry name" value="Triosephosphate_isomerase_AS"/>
</dbReference>
<dbReference type="NCBIfam" id="TIGR00419">
    <property type="entry name" value="tim"/>
    <property type="match status" value="1"/>
</dbReference>
<dbReference type="PANTHER" id="PTHR21139">
    <property type="entry name" value="TRIOSEPHOSPHATE ISOMERASE"/>
    <property type="match status" value="1"/>
</dbReference>
<dbReference type="PANTHER" id="PTHR21139:SF42">
    <property type="entry name" value="TRIOSEPHOSPHATE ISOMERASE"/>
    <property type="match status" value="1"/>
</dbReference>
<dbReference type="Pfam" id="PF00121">
    <property type="entry name" value="TIM"/>
    <property type="match status" value="1"/>
</dbReference>
<dbReference type="SUPFAM" id="SSF51351">
    <property type="entry name" value="Triosephosphate isomerase (TIM)"/>
    <property type="match status" value="1"/>
</dbReference>
<dbReference type="PROSITE" id="PS00171">
    <property type="entry name" value="TIM_1"/>
    <property type="match status" value="1"/>
</dbReference>
<dbReference type="PROSITE" id="PS51440">
    <property type="entry name" value="TIM_2"/>
    <property type="match status" value="1"/>
</dbReference>
<gene>
    <name evidence="1" type="primary">tpiA</name>
    <name type="ordered locus">Ctha_0537</name>
</gene>